<comment type="function">
    <text evidence="1">Involved in the modulation of the specificity of the ClpAP-mediated ATP-dependent protein degradation.</text>
</comment>
<comment type="subunit">
    <text evidence="1">Binds to the N-terminal domain of the chaperone ClpA.</text>
</comment>
<comment type="similarity">
    <text evidence="1">Belongs to the ClpS family.</text>
</comment>
<reference key="1">
    <citation type="journal article" date="2005" name="Genome Res.">
        <title>Comparative and functional genomic analyses of the pathogenicity of phytopathogen Xanthomonas campestris pv. campestris.</title>
        <authorList>
            <person name="Qian W."/>
            <person name="Jia Y."/>
            <person name="Ren S.-X."/>
            <person name="He Y.-Q."/>
            <person name="Feng J.-X."/>
            <person name="Lu L.-F."/>
            <person name="Sun Q."/>
            <person name="Ying G."/>
            <person name="Tang D.-J."/>
            <person name="Tang H."/>
            <person name="Wu W."/>
            <person name="Hao P."/>
            <person name="Wang L."/>
            <person name="Jiang B.-L."/>
            <person name="Zeng S."/>
            <person name="Gu W.-Y."/>
            <person name="Lu G."/>
            <person name="Rong L."/>
            <person name="Tian Y."/>
            <person name="Yao Z."/>
            <person name="Fu G."/>
            <person name="Chen B."/>
            <person name="Fang R."/>
            <person name="Qiang B."/>
            <person name="Chen Z."/>
            <person name="Zhao G.-P."/>
            <person name="Tang J.-L."/>
            <person name="He C."/>
        </authorList>
    </citation>
    <scope>NUCLEOTIDE SEQUENCE [LARGE SCALE GENOMIC DNA]</scope>
    <source>
        <strain>8004</strain>
    </source>
</reference>
<name>CLPS_XANC8</name>
<proteinExistence type="inferred from homology"/>
<dbReference type="EMBL" id="CP000050">
    <property type="protein sequence ID" value="AAY49274.1"/>
    <property type="molecule type" value="Genomic_DNA"/>
</dbReference>
<dbReference type="RefSeq" id="WP_011037130.1">
    <property type="nucleotide sequence ID" value="NZ_CP155948.1"/>
</dbReference>
<dbReference type="SMR" id="Q4UUJ9"/>
<dbReference type="KEGG" id="xcb:XC_2219"/>
<dbReference type="HOGENOM" id="CLU_134358_2_1_6"/>
<dbReference type="Proteomes" id="UP000000420">
    <property type="component" value="Chromosome"/>
</dbReference>
<dbReference type="GO" id="GO:0030163">
    <property type="term" value="P:protein catabolic process"/>
    <property type="evidence" value="ECO:0007669"/>
    <property type="project" value="InterPro"/>
</dbReference>
<dbReference type="GO" id="GO:0006508">
    <property type="term" value="P:proteolysis"/>
    <property type="evidence" value="ECO:0007669"/>
    <property type="project" value="UniProtKB-UniRule"/>
</dbReference>
<dbReference type="FunFam" id="3.30.1390.10:FF:000002">
    <property type="entry name" value="ATP-dependent Clp protease adapter protein ClpS"/>
    <property type="match status" value="1"/>
</dbReference>
<dbReference type="Gene3D" id="3.30.1390.10">
    <property type="match status" value="1"/>
</dbReference>
<dbReference type="HAMAP" id="MF_00302">
    <property type="entry name" value="ClpS"/>
    <property type="match status" value="1"/>
</dbReference>
<dbReference type="InterPro" id="IPR022935">
    <property type="entry name" value="ClpS"/>
</dbReference>
<dbReference type="InterPro" id="IPR003769">
    <property type="entry name" value="ClpS_core"/>
</dbReference>
<dbReference type="InterPro" id="IPR014719">
    <property type="entry name" value="Ribosomal_bL12_C/ClpS-like"/>
</dbReference>
<dbReference type="NCBIfam" id="NF000669">
    <property type="entry name" value="PRK00033.1-2"/>
    <property type="match status" value="1"/>
</dbReference>
<dbReference type="NCBIfam" id="NF000670">
    <property type="entry name" value="PRK00033.1-3"/>
    <property type="match status" value="1"/>
</dbReference>
<dbReference type="NCBIfam" id="NF000672">
    <property type="entry name" value="PRK00033.1-5"/>
    <property type="match status" value="1"/>
</dbReference>
<dbReference type="PANTHER" id="PTHR33473:SF19">
    <property type="entry name" value="ATP-DEPENDENT CLP PROTEASE ADAPTER PROTEIN CLPS"/>
    <property type="match status" value="1"/>
</dbReference>
<dbReference type="PANTHER" id="PTHR33473">
    <property type="entry name" value="ATP-DEPENDENT CLP PROTEASE ADAPTER PROTEIN CLPS1, CHLOROPLASTIC"/>
    <property type="match status" value="1"/>
</dbReference>
<dbReference type="Pfam" id="PF02617">
    <property type="entry name" value="ClpS"/>
    <property type="match status" value="1"/>
</dbReference>
<dbReference type="SUPFAM" id="SSF54736">
    <property type="entry name" value="ClpS-like"/>
    <property type="match status" value="1"/>
</dbReference>
<gene>
    <name evidence="1" type="primary">clpS</name>
    <name type="ordered locus">XC_2219</name>
</gene>
<evidence type="ECO:0000255" key="1">
    <source>
        <dbReference type="HAMAP-Rule" id="MF_00302"/>
    </source>
</evidence>
<evidence type="ECO:0000256" key="2">
    <source>
        <dbReference type="SAM" id="MobiDB-lite"/>
    </source>
</evidence>
<sequence>MPRKTSHEHDHGLVVETSKPEVAPPPRYQVLLLNDDYTPMDFVVTVLQQFFNLELERATQVMLHVHTRGRGVCGVYSREVAESKVAQVNEFSRMNQHPLLCTMEQA</sequence>
<feature type="chain" id="PRO_0000300732" description="ATP-dependent Clp protease adapter protein ClpS">
    <location>
        <begin position="1"/>
        <end position="106"/>
    </location>
</feature>
<feature type="region of interest" description="Disordered" evidence="2">
    <location>
        <begin position="1"/>
        <end position="21"/>
    </location>
</feature>
<feature type="compositionally biased region" description="Basic and acidic residues" evidence="2">
    <location>
        <begin position="1"/>
        <end position="13"/>
    </location>
</feature>
<accession>Q4UUJ9</accession>
<organism>
    <name type="scientific">Xanthomonas campestris pv. campestris (strain 8004)</name>
    <dbReference type="NCBI Taxonomy" id="314565"/>
    <lineage>
        <taxon>Bacteria</taxon>
        <taxon>Pseudomonadati</taxon>
        <taxon>Pseudomonadota</taxon>
        <taxon>Gammaproteobacteria</taxon>
        <taxon>Lysobacterales</taxon>
        <taxon>Lysobacteraceae</taxon>
        <taxon>Xanthomonas</taxon>
    </lineage>
</organism>
<protein>
    <recommendedName>
        <fullName evidence="1">ATP-dependent Clp protease adapter protein ClpS</fullName>
    </recommendedName>
</protein>